<dbReference type="EC" id="6.1.1.1" evidence="1"/>
<dbReference type="EMBL" id="CP000562">
    <property type="protein sequence ID" value="ABN58419.1"/>
    <property type="molecule type" value="Genomic_DNA"/>
</dbReference>
<dbReference type="RefSeq" id="WP_011845328.1">
    <property type="nucleotide sequence ID" value="NC_009051.1"/>
</dbReference>
<dbReference type="SMR" id="A3CYG9"/>
<dbReference type="STRING" id="368407.Memar_2498"/>
<dbReference type="GeneID" id="4848401"/>
<dbReference type="KEGG" id="mem:Memar_2498"/>
<dbReference type="eggNOG" id="arCOG01886">
    <property type="taxonomic scope" value="Archaea"/>
</dbReference>
<dbReference type="HOGENOM" id="CLU_035267_0_1_2"/>
<dbReference type="OrthoDB" id="8389at2157"/>
<dbReference type="Proteomes" id="UP000002146">
    <property type="component" value="Chromosome"/>
</dbReference>
<dbReference type="GO" id="GO:0005737">
    <property type="term" value="C:cytoplasm"/>
    <property type="evidence" value="ECO:0007669"/>
    <property type="project" value="UniProtKB-SubCell"/>
</dbReference>
<dbReference type="GO" id="GO:0005524">
    <property type="term" value="F:ATP binding"/>
    <property type="evidence" value="ECO:0007669"/>
    <property type="project" value="UniProtKB-UniRule"/>
</dbReference>
<dbReference type="GO" id="GO:0004831">
    <property type="term" value="F:tyrosine-tRNA ligase activity"/>
    <property type="evidence" value="ECO:0007669"/>
    <property type="project" value="UniProtKB-UniRule"/>
</dbReference>
<dbReference type="GO" id="GO:0006437">
    <property type="term" value="P:tyrosyl-tRNA aminoacylation"/>
    <property type="evidence" value="ECO:0007669"/>
    <property type="project" value="UniProtKB-UniRule"/>
</dbReference>
<dbReference type="CDD" id="cd00805">
    <property type="entry name" value="TyrRS_core"/>
    <property type="match status" value="1"/>
</dbReference>
<dbReference type="Gene3D" id="3.40.50.620">
    <property type="entry name" value="HUPs"/>
    <property type="match status" value="1"/>
</dbReference>
<dbReference type="Gene3D" id="1.10.240.10">
    <property type="entry name" value="Tyrosyl-Transfer RNA Synthetase"/>
    <property type="match status" value="1"/>
</dbReference>
<dbReference type="HAMAP" id="MF_02008">
    <property type="entry name" value="Tyr_tRNA_synth_type3"/>
    <property type="match status" value="1"/>
</dbReference>
<dbReference type="InterPro" id="IPR001412">
    <property type="entry name" value="aa-tRNA-synth_I_CS"/>
</dbReference>
<dbReference type="InterPro" id="IPR002305">
    <property type="entry name" value="aa-tRNA-synth_Ic"/>
</dbReference>
<dbReference type="InterPro" id="IPR014729">
    <property type="entry name" value="Rossmann-like_a/b/a_fold"/>
</dbReference>
<dbReference type="InterPro" id="IPR002307">
    <property type="entry name" value="Tyr-tRNA-ligase"/>
</dbReference>
<dbReference type="InterPro" id="IPR023684">
    <property type="entry name" value="Tyr-tRNA-ligase_3"/>
</dbReference>
<dbReference type="InterPro" id="IPR023617">
    <property type="entry name" value="Tyr-tRNA-ligase_arc/euk-type"/>
</dbReference>
<dbReference type="InterPro" id="IPR050489">
    <property type="entry name" value="Tyr-tRNA_synthase"/>
</dbReference>
<dbReference type="NCBIfam" id="NF006330">
    <property type="entry name" value="PRK08560.1"/>
    <property type="match status" value="1"/>
</dbReference>
<dbReference type="NCBIfam" id="TIGR00234">
    <property type="entry name" value="tyrS"/>
    <property type="match status" value="1"/>
</dbReference>
<dbReference type="PANTHER" id="PTHR46264:SF4">
    <property type="entry name" value="TYROSINE--TRNA LIGASE, CYTOPLASMIC"/>
    <property type="match status" value="1"/>
</dbReference>
<dbReference type="PANTHER" id="PTHR46264">
    <property type="entry name" value="TYROSINE-TRNA LIGASE"/>
    <property type="match status" value="1"/>
</dbReference>
<dbReference type="Pfam" id="PF00579">
    <property type="entry name" value="tRNA-synt_1b"/>
    <property type="match status" value="1"/>
</dbReference>
<dbReference type="PIRSF" id="PIRSF006588">
    <property type="entry name" value="TyrRS_arch_euk"/>
    <property type="match status" value="1"/>
</dbReference>
<dbReference type="PRINTS" id="PR01040">
    <property type="entry name" value="TRNASYNTHTYR"/>
</dbReference>
<dbReference type="SUPFAM" id="SSF52374">
    <property type="entry name" value="Nucleotidylyl transferase"/>
    <property type="match status" value="1"/>
</dbReference>
<dbReference type="PROSITE" id="PS00178">
    <property type="entry name" value="AA_TRNA_LIGASE_I"/>
    <property type="match status" value="1"/>
</dbReference>
<proteinExistence type="inferred from homology"/>
<protein>
    <recommendedName>
        <fullName evidence="1">Tyrosine--tRNA ligase</fullName>
        <ecNumber evidence="1">6.1.1.1</ecNumber>
    </recommendedName>
    <alternativeName>
        <fullName evidence="1">Tyrosyl-tRNA synthetase</fullName>
        <shortName evidence="1">TyrRS</shortName>
    </alternativeName>
</protein>
<sequence length="315" mass="35082">MDPYELVTRNTVEVVTDEELRALIDRPVRRVYTGYEPSGEIHLGHMVTVNKLMDLQQAGFEVTVLIADLHAFLNRKGTMEEIRETAEYNRRCFEGLGLRGANYVLGSDVQLTPEYELAVLELSQAITLNRAKRSMDEVGRQMDNPTVSQMVYPIMQMVDIATLGVDAAVGGIDQRKIHMLAREHLPSIGYPAPVCIHTPIINGLDGKKMSSSAGNVISVADSEEDIKKKMKKAFCPPEVENNPVLEILRYHVFPRAGAVAIRRPEKFGGDREFAAYEDLERAYAAGEIHPLDLKNAAAAHLIDILAPVHDYVCSR</sequence>
<name>SYY_METMJ</name>
<comment type="function">
    <text evidence="1">Catalyzes the attachment of tyrosine to tRNA(Tyr) in a two-step reaction: tyrosine is first activated by ATP to form Tyr-AMP and then transferred to the acceptor end of tRNA(Tyr).</text>
</comment>
<comment type="catalytic activity">
    <reaction evidence="1">
        <text>tRNA(Tyr) + L-tyrosine + ATP = L-tyrosyl-tRNA(Tyr) + AMP + diphosphate + H(+)</text>
        <dbReference type="Rhea" id="RHEA:10220"/>
        <dbReference type="Rhea" id="RHEA-COMP:9706"/>
        <dbReference type="Rhea" id="RHEA-COMP:9707"/>
        <dbReference type="ChEBI" id="CHEBI:15378"/>
        <dbReference type="ChEBI" id="CHEBI:30616"/>
        <dbReference type="ChEBI" id="CHEBI:33019"/>
        <dbReference type="ChEBI" id="CHEBI:58315"/>
        <dbReference type="ChEBI" id="CHEBI:78442"/>
        <dbReference type="ChEBI" id="CHEBI:78536"/>
        <dbReference type="ChEBI" id="CHEBI:456215"/>
        <dbReference type="EC" id="6.1.1.1"/>
    </reaction>
</comment>
<comment type="subunit">
    <text evidence="1">Homodimer.</text>
</comment>
<comment type="subcellular location">
    <subcellularLocation>
        <location evidence="1">Cytoplasm</location>
    </subcellularLocation>
</comment>
<comment type="similarity">
    <text evidence="1">Belongs to the class-I aminoacyl-tRNA synthetase family. TyrS type 3 subfamily.</text>
</comment>
<accession>A3CYG9</accession>
<reference key="1">
    <citation type="journal article" date="2009" name="Stand. Genomic Sci.">
        <title>Complete genome sequence of Methanoculleus marisnigri Romesser et al. 1981 type strain JR1.</title>
        <authorList>
            <person name="Anderson I.J."/>
            <person name="Sieprawska-Lupa M."/>
            <person name="Lapidus A."/>
            <person name="Nolan M."/>
            <person name="Copeland A."/>
            <person name="Glavina Del Rio T."/>
            <person name="Tice H."/>
            <person name="Dalin E."/>
            <person name="Barry K."/>
            <person name="Saunders E."/>
            <person name="Han C."/>
            <person name="Brettin T."/>
            <person name="Detter J.C."/>
            <person name="Bruce D."/>
            <person name="Mikhailova N."/>
            <person name="Pitluck S."/>
            <person name="Hauser L."/>
            <person name="Land M."/>
            <person name="Lucas S."/>
            <person name="Richardson P."/>
            <person name="Whitman W.B."/>
            <person name="Kyrpides N.C."/>
        </authorList>
    </citation>
    <scope>NUCLEOTIDE SEQUENCE [LARGE SCALE GENOMIC DNA]</scope>
    <source>
        <strain>ATCC 35101 / DSM 1498 / JR1</strain>
    </source>
</reference>
<keyword id="KW-0030">Aminoacyl-tRNA synthetase</keyword>
<keyword id="KW-0067">ATP-binding</keyword>
<keyword id="KW-0963">Cytoplasm</keyword>
<keyword id="KW-0436">Ligase</keyword>
<keyword id="KW-0547">Nucleotide-binding</keyword>
<keyword id="KW-0648">Protein biosynthesis</keyword>
<evidence type="ECO:0000255" key="1">
    <source>
        <dbReference type="HAMAP-Rule" id="MF_02008"/>
    </source>
</evidence>
<organism>
    <name type="scientific">Methanoculleus marisnigri (strain ATCC 35101 / DSM 1498 / JR1)</name>
    <dbReference type="NCBI Taxonomy" id="368407"/>
    <lineage>
        <taxon>Archaea</taxon>
        <taxon>Methanobacteriati</taxon>
        <taxon>Methanobacteriota</taxon>
        <taxon>Stenosarchaea group</taxon>
        <taxon>Methanomicrobia</taxon>
        <taxon>Methanomicrobiales</taxon>
        <taxon>Methanomicrobiaceae</taxon>
        <taxon>Methanoculleus</taxon>
    </lineage>
</organism>
<gene>
    <name evidence="1" type="primary">tyrS</name>
    <name type="ordered locus">Memar_2498</name>
</gene>
<feature type="chain" id="PRO_0000303678" description="Tyrosine--tRNA ligase">
    <location>
        <begin position="1"/>
        <end position="315"/>
    </location>
</feature>
<feature type="short sequence motif" description="'HIGH' region">
    <location>
        <begin position="37"/>
        <end position="45"/>
    </location>
</feature>
<feature type="short sequence motif" description="'KMSKS' region">
    <location>
        <begin position="208"/>
        <end position="212"/>
    </location>
</feature>
<feature type="binding site" evidence="1">
    <location>
        <position position="32"/>
    </location>
    <ligand>
        <name>L-tyrosine</name>
        <dbReference type="ChEBI" id="CHEBI:58315"/>
    </ligand>
</feature>
<feature type="binding site" evidence="1">
    <location>
        <position position="152"/>
    </location>
    <ligand>
        <name>L-tyrosine</name>
        <dbReference type="ChEBI" id="CHEBI:58315"/>
    </ligand>
</feature>
<feature type="binding site" evidence="1">
    <location>
        <position position="156"/>
    </location>
    <ligand>
        <name>L-tyrosine</name>
        <dbReference type="ChEBI" id="CHEBI:58315"/>
    </ligand>
</feature>
<feature type="binding site" evidence="1">
    <location>
        <position position="159"/>
    </location>
    <ligand>
        <name>L-tyrosine</name>
        <dbReference type="ChEBI" id="CHEBI:58315"/>
    </ligand>
</feature>
<feature type="binding site" evidence="1">
    <location>
        <position position="174"/>
    </location>
    <ligand>
        <name>L-tyrosine</name>
        <dbReference type="ChEBI" id="CHEBI:58315"/>
    </ligand>
</feature>
<feature type="binding site" evidence="1">
    <location>
        <position position="211"/>
    </location>
    <ligand>
        <name>ATP</name>
        <dbReference type="ChEBI" id="CHEBI:30616"/>
    </ligand>
</feature>